<protein>
    <recommendedName>
        <fullName evidence="1">Ribosome maturation factor RimM</fullName>
    </recommendedName>
</protein>
<feature type="chain" id="PRO_1000089512" description="Ribosome maturation factor RimM">
    <location>
        <begin position="1"/>
        <end position="176"/>
    </location>
</feature>
<feature type="domain" description="PRC barrel" evidence="1">
    <location>
        <begin position="99"/>
        <end position="173"/>
    </location>
</feature>
<evidence type="ECO:0000255" key="1">
    <source>
        <dbReference type="HAMAP-Rule" id="MF_00014"/>
    </source>
</evidence>
<gene>
    <name evidence="1" type="primary">rimM</name>
    <name type="ordered locus">P9211_17291</name>
</gene>
<keyword id="KW-0143">Chaperone</keyword>
<keyword id="KW-0963">Cytoplasm</keyword>
<keyword id="KW-1185">Reference proteome</keyword>
<keyword id="KW-0690">Ribosome biogenesis</keyword>
<keyword id="KW-0698">rRNA processing</keyword>
<sequence>MSRKDSWLTIGKLVGAQGLRGEVKVNPSSDFPERFINPGERWLQKNTEEPSRIELKSGRQLPGKSIYIVSFIGITDRNKAESIVGNKLLVPSDQKPKLKEGEFHLVDLLGLKAKFTQDGSDVGEVIDLTSAGNDLLVIKLVEGKTVLIPFVKEIVPVINLKQGWLLIKPPPGLLEL</sequence>
<accession>A9BD47</accession>
<reference key="1">
    <citation type="journal article" date="2007" name="PLoS Genet.">
        <title>Patterns and implications of gene gain and loss in the evolution of Prochlorococcus.</title>
        <authorList>
            <person name="Kettler G.C."/>
            <person name="Martiny A.C."/>
            <person name="Huang K."/>
            <person name="Zucker J."/>
            <person name="Coleman M.L."/>
            <person name="Rodrigue S."/>
            <person name="Chen F."/>
            <person name="Lapidus A."/>
            <person name="Ferriera S."/>
            <person name="Johnson J."/>
            <person name="Steglich C."/>
            <person name="Church G.M."/>
            <person name="Richardson P."/>
            <person name="Chisholm S.W."/>
        </authorList>
    </citation>
    <scope>NUCLEOTIDE SEQUENCE [LARGE SCALE GENOMIC DNA]</scope>
    <source>
        <strain>MIT 9211</strain>
    </source>
</reference>
<proteinExistence type="inferred from homology"/>
<organism>
    <name type="scientific">Prochlorococcus marinus (strain MIT 9211)</name>
    <dbReference type="NCBI Taxonomy" id="93059"/>
    <lineage>
        <taxon>Bacteria</taxon>
        <taxon>Bacillati</taxon>
        <taxon>Cyanobacteriota</taxon>
        <taxon>Cyanophyceae</taxon>
        <taxon>Synechococcales</taxon>
        <taxon>Prochlorococcaceae</taxon>
        <taxon>Prochlorococcus</taxon>
    </lineage>
</organism>
<dbReference type="EMBL" id="CP000878">
    <property type="protein sequence ID" value="ABX09660.1"/>
    <property type="molecule type" value="Genomic_DNA"/>
</dbReference>
<dbReference type="RefSeq" id="WP_012196280.1">
    <property type="nucleotide sequence ID" value="NC_009976.1"/>
</dbReference>
<dbReference type="SMR" id="A9BD47"/>
<dbReference type="STRING" id="93059.P9211_17291"/>
<dbReference type="KEGG" id="pmj:P9211_17291"/>
<dbReference type="eggNOG" id="COG0806">
    <property type="taxonomic scope" value="Bacteria"/>
</dbReference>
<dbReference type="HOGENOM" id="CLU_077636_3_1_3"/>
<dbReference type="OrthoDB" id="9810331at2"/>
<dbReference type="Proteomes" id="UP000000788">
    <property type="component" value="Chromosome"/>
</dbReference>
<dbReference type="GO" id="GO:0005737">
    <property type="term" value="C:cytoplasm"/>
    <property type="evidence" value="ECO:0007669"/>
    <property type="project" value="UniProtKB-SubCell"/>
</dbReference>
<dbReference type="GO" id="GO:0005840">
    <property type="term" value="C:ribosome"/>
    <property type="evidence" value="ECO:0007669"/>
    <property type="project" value="InterPro"/>
</dbReference>
<dbReference type="GO" id="GO:0043022">
    <property type="term" value="F:ribosome binding"/>
    <property type="evidence" value="ECO:0007669"/>
    <property type="project" value="InterPro"/>
</dbReference>
<dbReference type="GO" id="GO:0042274">
    <property type="term" value="P:ribosomal small subunit biogenesis"/>
    <property type="evidence" value="ECO:0007669"/>
    <property type="project" value="UniProtKB-UniRule"/>
</dbReference>
<dbReference type="GO" id="GO:0006364">
    <property type="term" value="P:rRNA processing"/>
    <property type="evidence" value="ECO:0007669"/>
    <property type="project" value="UniProtKB-UniRule"/>
</dbReference>
<dbReference type="Gene3D" id="2.30.30.240">
    <property type="entry name" value="PRC-barrel domain"/>
    <property type="match status" value="1"/>
</dbReference>
<dbReference type="Gene3D" id="2.40.30.60">
    <property type="entry name" value="RimM"/>
    <property type="match status" value="1"/>
</dbReference>
<dbReference type="HAMAP" id="MF_00014">
    <property type="entry name" value="Ribosome_mat_RimM"/>
    <property type="match status" value="1"/>
</dbReference>
<dbReference type="InterPro" id="IPR011033">
    <property type="entry name" value="PRC_barrel-like_sf"/>
</dbReference>
<dbReference type="InterPro" id="IPR056792">
    <property type="entry name" value="PRC_RimM"/>
</dbReference>
<dbReference type="InterPro" id="IPR011961">
    <property type="entry name" value="RimM"/>
</dbReference>
<dbReference type="InterPro" id="IPR002676">
    <property type="entry name" value="RimM_N"/>
</dbReference>
<dbReference type="InterPro" id="IPR036976">
    <property type="entry name" value="RimM_N_sf"/>
</dbReference>
<dbReference type="InterPro" id="IPR009000">
    <property type="entry name" value="Transl_B-barrel_sf"/>
</dbReference>
<dbReference type="NCBIfam" id="TIGR02273">
    <property type="entry name" value="16S_RimM"/>
    <property type="match status" value="1"/>
</dbReference>
<dbReference type="PANTHER" id="PTHR33692">
    <property type="entry name" value="RIBOSOME MATURATION FACTOR RIMM"/>
    <property type="match status" value="1"/>
</dbReference>
<dbReference type="PANTHER" id="PTHR33692:SF1">
    <property type="entry name" value="RIBOSOME MATURATION FACTOR RIMM"/>
    <property type="match status" value="1"/>
</dbReference>
<dbReference type="Pfam" id="PF24986">
    <property type="entry name" value="PRC_RimM"/>
    <property type="match status" value="1"/>
</dbReference>
<dbReference type="Pfam" id="PF01782">
    <property type="entry name" value="RimM"/>
    <property type="match status" value="1"/>
</dbReference>
<dbReference type="SUPFAM" id="SSF50346">
    <property type="entry name" value="PRC-barrel domain"/>
    <property type="match status" value="1"/>
</dbReference>
<dbReference type="SUPFAM" id="SSF50447">
    <property type="entry name" value="Translation proteins"/>
    <property type="match status" value="1"/>
</dbReference>
<name>RIMM_PROM4</name>
<comment type="function">
    <text evidence="1">An accessory protein needed during the final step in the assembly of 30S ribosomal subunit, possibly for assembly of the head region. Essential for efficient processing of 16S rRNA. May be needed both before and after RbfA during the maturation of 16S rRNA. It has affinity for free ribosomal 30S subunits but not for 70S ribosomes.</text>
</comment>
<comment type="subunit">
    <text evidence="1">Binds ribosomal protein uS19.</text>
</comment>
<comment type="subcellular location">
    <subcellularLocation>
        <location evidence="1">Cytoplasm</location>
    </subcellularLocation>
</comment>
<comment type="domain">
    <text evidence="1">The PRC barrel domain binds ribosomal protein uS19.</text>
</comment>
<comment type="similarity">
    <text evidence="1">Belongs to the RimM family.</text>
</comment>